<sequence>MSYGEIEGKFLGPREEVTSEPRCKKLKSTTESYVFHNHSNADFHRIQEKTGNDWVPVTIIDVRGHSYLQENKIKTTDLHRPLHDEMPGNRPDVIESIDSQVLQEARPPLVSADDEIYSTSKAFIGPIYKPPEKKKRNEGRNEAHVLNGINDRGGQKEKQKFNSEKSEIDNELFQFYKEIEELEKEKDGFENSCKESEPSQEQFVPFYEGHNNGLLKPDEEKKDLSNKAMPSHCDYQQNLGNEPDKYPCNGQVIPTFCDTSFTSFRPEWQSVYPFIVPYGPPLPSLNYHLNIQRFSGPPNPPSNIFQAQDDSQIQNGYYVNNCHVNWNCMTFDQNNEYTDCSENRSSVHPSGNGCSMQDRYVSNGFCEVRERCWKDHCMDKHNGTDRFVNQQFQEEKLNKLQKLLILLRGLPGSGKTTLSRILLGQNRDGIVFSTDDYFHHQDGYRYNVNQLGDAHDWNQNRAKQAIDQGRSPVIIDNTNIQAWEMKPYVEVAIGKGYRVEFHEPETWWKFDPEELEKRNKHGVSRKKIAQMLDRYEYQMSISIVMNSVEPSHKSTQRPPPPQGRQRWGGSLGSHNRVCVTNNH</sequence>
<gene>
    <name type="primary">N4BP2L2</name>
    <name type="synonym">CG005</name>
    <name type="synonym">PFAAP5</name>
</gene>
<evidence type="ECO:0000255" key="1"/>
<evidence type="ECO:0000256" key="2">
    <source>
        <dbReference type="SAM" id="MobiDB-lite"/>
    </source>
</evidence>
<evidence type="ECO:0000303" key="3">
    <source>
    </source>
</evidence>
<evidence type="ECO:0000305" key="4"/>
<dbReference type="EMBL" id="U50532">
    <property type="protein sequence ID" value="AAC50875.1"/>
    <property type="molecule type" value="mRNA"/>
</dbReference>
<dbReference type="EMBL" id="AF530063">
    <property type="protein sequence ID" value="AAQ09947.1"/>
    <property type="molecule type" value="mRNA"/>
</dbReference>
<dbReference type="EMBL" id="AL049783">
    <property type="protein sequence ID" value="CAB42441.1"/>
    <property type="molecule type" value="mRNA"/>
</dbReference>
<dbReference type="EMBL" id="BT007172">
    <property type="protein sequence ID" value="AAP35836.1"/>
    <property type="molecule type" value="mRNA"/>
</dbReference>
<dbReference type="EMBL" id="AL353665">
    <property type="status" value="NOT_ANNOTATED_CDS"/>
    <property type="molecule type" value="Genomic_DNA"/>
</dbReference>
<dbReference type="EMBL" id="CH471075">
    <property type="protein sequence ID" value="EAX08514.1"/>
    <property type="molecule type" value="Genomic_DNA"/>
</dbReference>
<dbReference type="EMBL" id="BC010643">
    <property type="protein sequence ID" value="AAH10643.1"/>
    <property type="molecule type" value="mRNA"/>
</dbReference>
<dbReference type="EMBL" id="BC131631">
    <property type="protein sequence ID" value="AAI31632.1"/>
    <property type="status" value="ALT_SEQ"/>
    <property type="molecule type" value="mRNA"/>
</dbReference>
<dbReference type="EMBL" id="BP361938">
    <property type="status" value="NOT_ANNOTATED_CDS"/>
    <property type="molecule type" value="mRNA"/>
</dbReference>
<dbReference type="CCDS" id="CCDS45024.1">
    <molecule id="Q92802-3"/>
</dbReference>
<dbReference type="CCDS" id="CCDS9346.1">
    <molecule id="Q92802-1"/>
</dbReference>
<dbReference type="RefSeq" id="NP_001374009.1">
    <molecule id="Q92802-1"/>
    <property type="nucleotide sequence ID" value="NM_001387080.1"/>
</dbReference>
<dbReference type="RefSeq" id="NP_001374011.1">
    <molecule id="Q92802-1"/>
    <property type="nucleotide sequence ID" value="NM_001387082.1"/>
</dbReference>
<dbReference type="RefSeq" id="NP_001374030.1">
    <molecule id="Q92802-1"/>
    <property type="nucleotide sequence ID" value="NM_001387101.1"/>
</dbReference>
<dbReference type="RefSeq" id="NP_001374031.1">
    <molecule id="Q92802-1"/>
    <property type="nucleotide sequence ID" value="NM_001387102.1"/>
</dbReference>
<dbReference type="RefSeq" id="NP_055702.1">
    <molecule id="Q92802-1"/>
    <property type="nucleotide sequence ID" value="NM_014887.3"/>
</dbReference>
<dbReference type="RefSeq" id="XP_016875836.1">
    <property type="nucleotide sequence ID" value="XM_017020347.1"/>
</dbReference>
<dbReference type="RefSeq" id="XP_016875837.1">
    <property type="nucleotide sequence ID" value="XM_017020348.1"/>
</dbReference>
<dbReference type="RefSeq" id="XP_016875838.1">
    <property type="nucleotide sequence ID" value="XM_017020349.1"/>
</dbReference>
<dbReference type="BioGRID" id="115708">
    <property type="interactions" value="85"/>
</dbReference>
<dbReference type="FunCoup" id="Q92802">
    <property type="interactions" value="1409"/>
</dbReference>
<dbReference type="IntAct" id="Q92802">
    <property type="interactions" value="89"/>
</dbReference>
<dbReference type="MINT" id="Q92802"/>
<dbReference type="STRING" id="9606.ENSP00000382328"/>
<dbReference type="iPTMnet" id="Q92802"/>
<dbReference type="PhosphoSitePlus" id="Q92802"/>
<dbReference type="BioMuta" id="N4BP2L2"/>
<dbReference type="DMDM" id="74751659"/>
<dbReference type="jPOST" id="Q92802"/>
<dbReference type="MassIVE" id="Q92802"/>
<dbReference type="PaxDb" id="9606-ENSP00000382328"/>
<dbReference type="PeptideAtlas" id="Q92802"/>
<dbReference type="ProteomicsDB" id="75485">
    <molecule id="Q92802-1"/>
</dbReference>
<dbReference type="ProteomicsDB" id="75486">
    <molecule id="Q92802-2"/>
</dbReference>
<dbReference type="ProteomicsDB" id="75487">
    <molecule id="Q92802-3"/>
</dbReference>
<dbReference type="Pumba" id="Q92802"/>
<dbReference type="Antibodypedia" id="42083">
    <property type="antibodies" value="233 antibodies from 22 providers"/>
</dbReference>
<dbReference type="DNASU" id="10443"/>
<dbReference type="Ensembl" id="ENST00000267068.6">
    <molecule id="Q92802-1"/>
    <property type="protein sequence ID" value="ENSP00000267068.3"/>
    <property type="gene ID" value="ENSG00000244754.9"/>
</dbReference>
<dbReference type="Ensembl" id="ENST00000399396.7">
    <molecule id="Q92802-3"/>
    <property type="protein sequence ID" value="ENSP00000382328.3"/>
    <property type="gene ID" value="ENSG00000244754.9"/>
</dbReference>
<dbReference type="Ensembl" id="ENST00000446957.6">
    <molecule id="Q92802-2"/>
    <property type="protein sequence ID" value="ENSP00000394239.2"/>
    <property type="gene ID" value="ENSG00000244754.9"/>
</dbReference>
<dbReference type="Ensembl" id="ENST00000674349.1">
    <molecule id="Q92802-1"/>
    <property type="protein sequence ID" value="ENSP00000501516.1"/>
    <property type="gene ID" value="ENSG00000244754.9"/>
</dbReference>
<dbReference type="Ensembl" id="ENST00000674421.1">
    <molecule id="Q92802-1"/>
    <property type="protein sequence ID" value="ENSP00000501518.1"/>
    <property type="gene ID" value="ENSG00000244754.9"/>
</dbReference>
<dbReference type="Ensembl" id="ENST00000674465.1">
    <molecule id="Q92802-1"/>
    <property type="protein sequence ID" value="ENSP00000501416.1"/>
    <property type="gene ID" value="ENSG00000244754.9"/>
</dbReference>
<dbReference type="Ensembl" id="ENST00000674484.1">
    <molecule id="Q92802-1"/>
    <property type="protein sequence ID" value="ENSP00000501537.1"/>
    <property type="gene ID" value="ENSG00000244754.9"/>
</dbReference>
<dbReference type="GeneID" id="10443"/>
<dbReference type="KEGG" id="hsa:10443"/>
<dbReference type="MANE-Select" id="ENST00000267068.6">
    <property type="protein sequence ID" value="ENSP00000267068.3"/>
    <property type="RefSeq nucleotide sequence ID" value="NM_014887.3"/>
    <property type="RefSeq protein sequence ID" value="NP_055702.1"/>
</dbReference>
<dbReference type="UCSC" id="uc001uuk.5">
    <molecule id="Q92802-1"/>
    <property type="organism name" value="human"/>
</dbReference>
<dbReference type="AGR" id="HGNC:26916"/>
<dbReference type="CTD" id="10443"/>
<dbReference type="DisGeNET" id="10443"/>
<dbReference type="GeneCards" id="N4BP2L2"/>
<dbReference type="HGNC" id="HGNC:26916">
    <property type="gene designation" value="N4BP2L2"/>
</dbReference>
<dbReference type="HPA" id="ENSG00000244754">
    <property type="expression patterns" value="Low tissue specificity"/>
</dbReference>
<dbReference type="MIM" id="615788">
    <property type="type" value="gene"/>
</dbReference>
<dbReference type="neXtProt" id="NX_Q92802"/>
<dbReference type="OpenTargets" id="ENSG00000244754"/>
<dbReference type="PharmGKB" id="PA162396632"/>
<dbReference type="VEuPathDB" id="HostDB:ENSG00000244754"/>
<dbReference type="eggNOG" id="KOG2401">
    <property type="taxonomic scope" value="Eukaryota"/>
</dbReference>
<dbReference type="GeneTree" id="ENSGT00940000161440"/>
<dbReference type="HOGENOM" id="CLU_006655_0_0_1"/>
<dbReference type="InParanoid" id="Q92802"/>
<dbReference type="OMA" id="HIRERHT"/>
<dbReference type="OrthoDB" id="3231855at2759"/>
<dbReference type="PAN-GO" id="Q92802">
    <property type="GO annotations" value="3 GO annotations based on evolutionary models"/>
</dbReference>
<dbReference type="PhylomeDB" id="Q92802"/>
<dbReference type="TreeFam" id="TF336975"/>
<dbReference type="PathwayCommons" id="Q92802"/>
<dbReference type="SignaLink" id="Q92802"/>
<dbReference type="BioGRID-ORCS" id="10443">
    <property type="hits" value="12 hits in 1151 CRISPR screens"/>
</dbReference>
<dbReference type="ChiTaRS" id="N4BP2L2">
    <property type="organism name" value="human"/>
</dbReference>
<dbReference type="GenomeRNAi" id="10443"/>
<dbReference type="Pharos" id="Q92802">
    <property type="development level" value="Tbio"/>
</dbReference>
<dbReference type="PRO" id="PR:Q92802"/>
<dbReference type="Proteomes" id="UP000005640">
    <property type="component" value="Chromosome 13"/>
</dbReference>
<dbReference type="RNAct" id="Q92802">
    <property type="molecule type" value="protein"/>
</dbReference>
<dbReference type="Bgee" id="ENSG00000244754">
    <property type="expression patterns" value="Expressed in calcaneal tendon and 201 other cell types or tissues"/>
</dbReference>
<dbReference type="ExpressionAtlas" id="Q92802">
    <property type="expression patterns" value="baseline and differential"/>
</dbReference>
<dbReference type="GO" id="GO:0070062">
    <property type="term" value="C:extracellular exosome"/>
    <property type="evidence" value="ECO:0007005"/>
    <property type="project" value="UniProtKB"/>
</dbReference>
<dbReference type="GO" id="GO:0005634">
    <property type="term" value="C:nucleus"/>
    <property type="evidence" value="ECO:0000314"/>
    <property type="project" value="UniProtKB"/>
</dbReference>
<dbReference type="GO" id="GO:0017053">
    <property type="term" value="C:transcription repressor complex"/>
    <property type="evidence" value="ECO:0000314"/>
    <property type="project" value="UniProtKB"/>
</dbReference>
<dbReference type="GO" id="GO:0019899">
    <property type="term" value="F:enzyme binding"/>
    <property type="evidence" value="ECO:0000353"/>
    <property type="project" value="UniProtKB"/>
</dbReference>
<dbReference type="GO" id="GO:0003714">
    <property type="term" value="F:transcription corepressor activity"/>
    <property type="evidence" value="ECO:0000250"/>
    <property type="project" value="UniProtKB"/>
</dbReference>
<dbReference type="GO" id="GO:0001824">
    <property type="term" value="P:blastocyst development"/>
    <property type="evidence" value="ECO:0007669"/>
    <property type="project" value="Ensembl"/>
</dbReference>
<dbReference type="GO" id="GO:1902037">
    <property type="term" value="P:negative regulation of hematopoietic stem cell differentiation"/>
    <property type="evidence" value="ECO:0000315"/>
    <property type="project" value="UniProtKB"/>
</dbReference>
<dbReference type="GO" id="GO:0000122">
    <property type="term" value="P:negative regulation of transcription by RNA polymerase II"/>
    <property type="evidence" value="ECO:0000250"/>
    <property type="project" value="CAFA"/>
</dbReference>
<dbReference type="GO" id="GO:1902035">
    <property type="term" value="P:positive regulation of hematopoietic stem cell proliferation"/>
    <property type="evidence" value="ECO:0000315"/>
    <property type="project" value="UniProtKB"/>
</dbReference>
<dbReference type="FunFam" id="3.40.50.300:FF:000620">
    <property type="entry name" value="NEDD4-binding protein 2 isoform X1"/>
    <property type="match status" value="1"/>
</dbReference>
<dbReference type="Gene3D" id="3.40.50.300">
    <property type="entry name" value="P-loop containing nucleotide triphosphate hydrolases"/>
    <property type="match status" value="1"/>
</dbReference>
<dbReference type="InterPro" id="IPR026302">
    <property type="entry name" value="NEDD4-bd_p2"/>
</dbReference>
<dbReference type="InterPro" id="IPR027417">
    <property type="entry name" value="P-loop_NTPase"/>
</dbReference>
<dbReference type="PANTHER" id="PTHR13308">
    <property type="entry name" value="NEDD4-BINDING PROTEIN 2-LIKE 1"/>
    <property type="match status" value="1"/>
</dbReference>
<dbReference type="PANTHER" id="PTHR13308:SF23">
    <property type="entry name" value="NEDD4-BINDING PROTEIN 2-LIKE 2"/>
    <property type="match status" value="1"/>
</dbReference>
<dbReference type="Pfam" id="PF13671">
    <property type="entry name" value="AAA_33"/>
    <property type="match status" value="1"/>
</dbReference>
<dbReference type="SUPFAM" id="SSF52540">
    <property type="entry name" value="P-loop containing nucleoside triphosphate hydrolases"/>
    <property type="match status" value="1"/>
</dbReference>
<proteinExistence type="evidence at protein level"/>
<protein>
    <recommendedName>
        <fullName>NEDD4-binding protein 2-like 2</fullName>
    </recommendedName>
    <alternativeName>
        <fullName>Phosphonoformate immuno-associated protein 5</fullName>
    </alternativeName>
</protein>
<reference key="1">
    <citation type="journal article" date="1996" name="Genomics">
        <title>Generation of an integrated transcription map of the BRCA2 region on chromosome 13q12-q13.</title>
        <authorList>
            <person name="Couch F.J."/>
            <person name="Rommens J.M."/>
            <person name="Neuhausen S.L."/>
            <person name="Belanger C."/>
            <person name="Dumont M."/>
            <person name="Kenneth A."/>
            <person name="Bell R."/>
            <person name="Berry S."/>
            <person name="Bogden R."/>
            <person name="Cannon-Albright L."/>
            <person name="Farid L."/>
            <person name="Frye C."/>
            <person name="Hattier T."/>
            <person name="Janecki T."/>
            <person name="Jiang P."/>
            <person name="Kehrer R."/>
            <person name="Leblanc J.F."/>
            <person name="McArthur-Morrison J."/>
            <person name="McSweeney D."/>
            <person name="Miki Y."/>
            <person name="Peng Y."/>
            <person name="Samson C."/>
            <person name="Schroeder M."/>
            <person name="Snyder S.C."/>
            <person name="Stringfellow M."/>
            <person name="Stroup C."/>
            <person name="Swedlund B."/>
            <person name="Swensen J."/>
            <person name="Teng D."/>
            <person name="Thakur S."/>
            <person name="Tran T."/>
            <person name="Tranchant M."/>
            <person name="Welver-Feldhaus J."/>
            <person name="Wong A.K.C."/>
            <person name="Shizuya H."/>
            <person name="Labrie F."/>
            <person name="Skolnick M.H."/>
            <person name="Goldgar D.E."/>
            <person name="Kamb A."/>
            <person name="Weber B.L."/>
            <person name="Tavtigian S.V."/>
            <person name="Simard J."/>
        </authorList>
    </citation>
    <scope>NUCLEOTIDE SEQUENCE [MRNA] (ISOFORM 1)</scope>
</reference>
<reference key="2">
    <citation type="submission" date="2002-07" db="EMBL/GenBank/DDBJ databases">
        <title>Screening and cloning of a new immuno-associated gene regulated by phosphonoformate.</title>
        <authorList>
            <person name="Liu Y."/>
            <person name="Cheng J."/>
            <person name="Lu Y."/>
        </authorList>
    </citation>
    <scope>NUCLEOTIDE SEQUENCE [MRNA] (ISOFORM 1)</scope>
</reference>
<reference key="3">
    <citation type="submission" date="1999-05" db="EMBL/GenBank/DDBJ databases">
        <authorList>
            <person name="Rhodes S."/>
        </authorList>
    </citation>
    <scope>NUCLEOTIDE SEQUENCE [LARGE SCALE MRNA] (ISOFORM 1)</scope>
</reference>
<reference key="4">
    <citation type="submission" date="2003-05" db="EMBL/GenBank/DDBJ databases">
        <title>Cloning of human full-length CDSs in BD Creator(TM) system donor vector.</title>
        <authorList>
            <person name="Kalnine N."/>
            <person name="Chen X."/>
            <person name="Rolfs A."/>
            <person name="Halleck A."/>
            <person name="Hines L."/>
            <person name="Eisenstein S."/>
            <person name="Koundinya M."/>
            <person name="Raphael J."/>
            <person name="Moreira D."/>
            <person name="Kelley T."/>
            <person name="LaBaer J."/>
            <person name="Lin Y."/>
            <person name="Phelan M."/>
            <person name="Farmer A."/>
        </authorList>
    </citation>
    <scope>NUCLEOTIDE SEQUENCE [LARGE SCALE MRNA] (ISOFORM 1)</scope>
</reference>
<reference key="5">
    <citation type="journal article" date="2004" name="Nature">
        <title>The DNA sequence and analysis of human chromosome 13.</title>
        <authorList>
            <person name="Dunham A."/>
            <person name="Matthews L.H."/>
            <person name="Burton J."/>
            <person name="Ashurst J.L."/>
            <person name="Howe K.L."/>
            <person name="Ashcroft K.J."/>
            <person name="Beare D.M."/>
            <person name="Burford D.C."/>
            <person name="Hunt S.E."/>
            <person name="Griffiths-Jones S."/>
            <person name="Jones M.C."/>
            <person name="Keenan S.J."/>
            <person name="Oliver K."/>
            <person name="Scott C.E."/>
            <person name="Ainscough R."/>
            <person name="Almeida J.P."/>
            <person name="Ambrose K.D."/>
            <person name="Andrews D.T."/>
            <person name="Ashwell R.I.S."/>
            <person name="Babbage A.K."/>
            <person name="Bagguley C.L."/>
            <person name="Bailey J."/>
            <person name="Bannerjee R."/>
            <person name="Barlow K.F."/>
            <person name="Bates K."/>
            <person name="Beasley H."/>
            <person name="Bird C.P."/>
            <person name="Bray-Allen S."/>
            <person name="Brown A.J."/>
            <person name="Brown J.Y."/>
            <person name="Burrill W."/>
            <person name="Carder C."/>
            <person name="Carter N.P."/>
            <person name="Chapman J.C."/>
            <person name="Clamp M.E."/>
            <person name="Clark S.Y."/>
            <person name="Clarke G."/>
            <person name="Clee C.M."/>
            <person name="Clegg S.C."/>
            <person name="Cobley V."/>
            <person name="Collins J.E."/>
            <person name="Corby N."/>
            <person name="Coville G.J."/>
            <person name="Deloukas P."/>
            <person name="Dhami P."/>
            <person name="Dunham I."/>
            <person name="Dunn M."/>
            <person name="Earthrowl M.E."/>
            <person name="Ellington A.G."/>
            <person name="Faulkner L."/>
            <person name="Frankish A.G."/>
            <person name="Frankland J."/>
            <person name="French L."/>
            <person name="Garner P."/>
            <person name="Garnett J."/>
            <person name="Gilbert J.G.R."/>
            <person name="Gilson C.J."/>
            <person name="Ghori J."/>
            <person name="Grafham D.V."/>
            <person name="Gribble S.M."/>
            <person name="Griffiths C."/>
            <person name="Hall R.E."/>
            <person name="Hammond S."/>
            <person name="Harley J.L."/>
            <person name="Hart E.A."/>
            <person name="Heath P.D."/>
            <person name="Howden P.J."/>
            <person name="Huckle E.J."/>
            <person name="Hunt P.J."/>
            <person name="Hunt A.R."/>
            <person name="Johnson C."/>
            <person name="Johnson D."/>
            <person name="Kay M."/>
            <person name="Kimberley A.M."/>
            <person name="King A."/>
            <person name="Laird G.K."/>
            <person name="Langford C.J."/>
            <person name="Lawlor S."/>
            <person name="Leongamornlert D.A."/>
            <person name="Lloyd D.M."/>
            <person name="Lloyd C."/>
            <person name="Loveland J.E."/>
            <person name="Lovell J."/>
            <person name="Martin S."/>
            <person name="Mashreghi-Mohammadi M."/>
            <person name="McLaren S.J."/>
            <person name="McMurray A."/>
            <person name="Milne S."/>
            <person name="Moore M.J.F."/>
            <person name="Nickerson T."/>
            <person name="Palmer S.A."/>
            <person name="Pearce A.V."/>
            <person name="Peck A.I."/>
            <person name="Pelan S."/>
            <person name="Phillimore B."/>
            <person name="Porter K.M."/>
            <person name="Rice C.M."/>
            <person name="Searle S."/>
            <person name="Sehra H.K."/>
            <person name="Shownkeen R."/>
            <person name="Skuce C.D."/>
            <person name="Smith M."/>
            <person name="Steward C.A."/>
            <person name="Sycamore N."/>
            <person name="Tester J."/>
            <person name="Thomas D.W."/>
            <person name="Tracey A."/>
            <person name="Tromans A."/>
            <person name="Tubby B."/>
            <person name="Wall M."/>
            <person name="Wallis J.M."/>
            <person name="West A.P."/>
            <person name="Whitehead S.L."/>
            <person name="Willey D.L."/>
            <person name="Wilming L."/>
            <person name="Wray P.W."/>
            <person name="Wright M.W."/>
            <person name="Young L."/>
            <person name="Coulson A."/>
            <person name="Durbin R.M."/>
            <person name="Hubbard T."/>
            <person name="Sulston J.E."/>
            <person name="Beck S."/>
            <person name="Bentley D.R."/>
            <person name="Rogers J."/>
            <person name="Ross M.T."/>
        </authorList>
    </citation>
    <scope>NUCLEOTIDE SEQUENCE [LARGE SCALE GENOMIC DNA]</scope>
</reference>
<reference key="6">
    <citation type="submission" date="2006-12" db="EMBL/GenBank/DDBJ databases">
        <authorList>
            <person name="Mural R.J."/>
            <person name="Istrail S."/>
            <person name="Sutton G.G."/>
            <person name="Florea L."/>
            <person name="Halpern A.L."/>
            <person name="Mobarry C.M."/>
            <person name="Lippert R."/>
            <person name="Walenz B."/>
            <person name="Shatkay H."/>
            <person name="Dew I."/>
            <person name="Miller J.R."/>
            <person name="Flanigan M.J."/>
            <person name="Edwards N.J."/>
            <person name="Bolanos R."/>
            <person name="Fasulo D."/>
            <person name="Halldorsson B.V."/>
            <person name="Hannenhalli S."/>
            <person name="Turner R."/>
            <person name="Yooseph S."/>
            <person name="Lu F."/>
            <person name="Nusskern D.R."/>
            <person name="Shue B.C."/>
            <person name="Zheng X.H."/>
            <person name="Zhong F."/>
            <person name="Delcher A.L."/>
            <person name="Huson D.H."/>
            <person name="Kravitz S.A."/>
            <person name="Mouchard L."/>
            <person name="Reinert K."/>
            <person name="Remington K.A."/>
            <person name="Clark A.G."/>
            <person name="Waterman M.S."/>
            <person name="Eichler E.E."/>
            <person name="Adams M.D."/>
            <person name="Hunkapiller M.W."/>
            <person name="Myers E.W."/>
            <person name="Venter J.C."/>
        </authorList>
    </citation>
    <scope>NUCLEOTIDE SEQUENCE [LARGE SCALE GENOMIC DNA]</scope>
</reference>
<reference key="7">
    <citation type="journal article" date="2004" name="Genome Res.">
        <title>The status, quality, and expansion of the NIH full-length cDNA project: the Mammalian Gene Collection (MGC).</title>
        <authorList>
            <consortium name="The MGC Project Team"/>
        </authorList>
    </citation>
    <scope>NUCLEOTIDE SEQUENCE [LARGE SCALE MRNA] (ISOFORM 1)</scope>
    <scope>NUCLEOTIDE SEQUENCE [LARGE SCALE MRNA] OF 434-583 (ISOFORM 2)</scope>
    <source>
        <tissue>Colon</tissue>
    </source>
</reference>
<reference key="8">
    <citation type="journal article" date="2006" name="Genome Res.">
        <title>Diversification of transcriptional modulation: large-scale identification and characterization of putative alternative promoters of human genes.</title>
        <authorList>
            <person name="Kimura K."/>
            <person name="Wakamatsu A."/>
            <person name="Suzuki Y."/>
            <person name="Ota T."/>
            <person name="Nishikawa T."/>
            <person name="Yamashita R."/>
            <person name="Yamamoto J."/>
            <person name="Sekine M."/>
            <person name="Tsuritani K."/>
            <person name="Wakaguri H."/>
            <person name="Ishii S."/>
            <person name="Sugiyama T."/>
            <person name="Saito K."/>
            <person name="Isono Y."/>
            <person name="Irie R."/>
            <person name="Kushida N."/>
            <person name="Yoneyama T."/>
            <person name="Otsuka R."/>
            <person name="Kanda K."/>
            <person name="Yokoi T."/>
            <person name="Kondo H."/>
            <person name="Wagatsuma M."/>
            <person name="Murakawa K."/>
            <person name="Ishida S."/>
            <person name="Ishibashi T."/>
            <person name="Takahashi-Fujii A."/>
            <person name="Tanase T."/>
            <person name="Nagai K."/>
            <person name="Kikuchi H."/>
            <person name="Nakai K."/>
            <person name="Isogai T."/>
            <person name="Sugano S."/>
        </authorList>
    </citation>
    <scope>PARTIAL NUCLEOTIDE SEQUENCE [LARGE SCALE MRNA] (ISOFORM 3)</scope>
</reference>
<reference key="9">
    <citation type="journal article" date="2014" name="J. Proteomics">
        <title>An enzyme assisted RP-RPLC approach for in-depth analysis of human liver phosphoproteome.</title>
        <authorList>
            <person name="Bian Y."/>
            <person name="Song C."/>
            <person name="Cheng K."/>
            <person name="Dong M."/>
            <person name="Wang F."/>
            <person name="Huang J."/>
            <person name="Sun D."/>
            <person name="Wang L."/>
            <person name="Ye M."/>
            <person name="Zou H."/>
        </authorList>
    </citation>
    <scope>IDENTIFICATION BY MASS SPECTROMETRY [LARGE SCALE ANALYSIS]</scope>
    <source>
        <tissue>Liver</tissue>
    </source>
</reference>
<comment type="interaction">
    <interactant intactId="EBI-2514973">
        <id>Q92802</id>
    </interactant>
    <interactant intactId="EBI-740785">
        <id>P49639</id>
        <label>HOXA1</label>
    </interactant>
    <organismsDiffer>false</organismsDiffer>
    <experiments>3</experiments>
</comment>
<comment type="interaction">
    <interactant intactId="EBI-2514973">
        <id>Q92802</id>
    </interactant>
    <interactant intactId="EBI-739696">
        <id>P25791</id>
        <label>LMO2</label>
    </interactant>
    <organismsDiffer>false</organismsDiffer>
    <experiments>3</experiments>
</comment>
<comment type="interaction">
    <interactant intactId="EBI-2514973">
        <id>Q92802</id>
    </interactant>
    <interactant intactId="EBI-9106509">
        <id>Q9BRA0</id>
        <label>NAA38</label>
    </interactant>
    <organismsDiffer>false</organismsDiffer>
    <experiments>3</experiments>
</comment>
<comment type="interaction">
    <interactant intactId="EBI-2514973">
        <id>Q92802</id>
    </interactant>
    <interactant intactId="EBI-1055615">
        <id>O43447</id>
        <label>PPIH</label>
    </interactant>
    <organismsDiffer>false</organismsDiffer>
    <experiments>10</experiments>
</comment>
<comment type="interaction">
    <interactant intactId="EBI-2514973">
        <id>Q92802</id>
    </interactant>
    <interactant intactId="EBI-2557649">
        <id>Q9Y3C6</id>
        <label>PPIL1</label>
    </interactant>
    <organismsDiffer>false</organismsDiffer>
    <experiments>3</experiments>
</comment>
<comment type="interaction">
    <interactant intactId="EBI-2514973">
        <id>Q92802</id>
    </interactant>
    <interactant intactId="EBI-3957603">
        <id>P09022</id>
        <label>Hoxa1</label>
    </interactant>
    <organismsDiffer>true</organismsDiffer>
    <experiments>3</experiments>
</comment>
<comment type="alternative products">
    <event type="alternative splicing"/>
    <isoform>
        <id>Q92802-1</id>
        <name>1</name>
        <sequence type="displayed"/>
    </isoform>
    <isoform>
        <id>Q92802-2</id>
        <name>2</name>
        <sequence type="described" ref="VSP_027518"/>
    </isoform>
    <isoform>
        <id>Q92802-3</id>
        <name>3</name>
        <sequence type="described" ref="VSP_041337 VSP_041338 VSP_041339"/>
    </isoform>
</comment>
<comment type="sequence caution" evidence="4">
    <conflict type="miscellaneous discrepancy">
        <sequence resource="EMBL-CDS" id="AAI31632"/>
    </conflict>
    <text>Contaminating sequence. Sequence of unknown origin in the N-terminal part.</text>
</comment>
<comment type="sequence caution" evidence="4">
    <conflict type="frameshift">
        <sequence resource="EMBL" id="BP361938"/>
    </conflict>
</comment>
<accession>Q92802</accession>
<accession>A3KME8</accession>
<organism>
    <name type="scientific">Homo sapiens</name>
    <name type="common">Human</name>
    <dbReference type="NCBI Taxonomy" id="9606"/>
    <lineage>
        <taxon>Eukaryota</taxon>
        <taxon>Metazoa</taxon>
        <taxon>Chordata</taxon>
        <taxon>Craniata</taxon>
        <taxon>Vertebrata</taxon>
        <taxon>Euteleostomi</taxon>
        <taxon>Mammalia</taxon>
        <taxon>Eutheria</taxon>
        <taxon>Euarchontoglires</taxon>
        <taxon>Primates</taxon>
        <taxon>Haplorrhini</taxon>
        <taxon>Catarrhini</taxon>
        <taxon>Hominidae</taxon>
        <taxon>Homo</taxon>
    </lineage>
</organism>
<feature type="chain" id="PRO_0000299026" description="NEDD4-binding protein 2-like 2">
    <location>
        <begin position="1"/>
        <end position="583"/>
    </location>
</feature>
<feature type="region of interest" description="Disordered" evidence="2">
    <location>
        <begin position="549"/>
        <end position="575"/>
    </location>
</feature>
<feature type="coiled-coil region" evidence="1">
    <location>
        <begin position="162"/>
        <end position="197"/>
    </location>
</feature>
<feature type="splice variant" id="VSP_041337" description="In isoform 3." evidence="4">
    <original>GKFLGPREEVTSEPRCKKLKSTTES</original>
    <variation>EFCLVRIVMALCSALMTIFTIKMGT</variation>
    <location>
        <begin position="8"/>
        <end position="32"/>
    </location>
</feature>
<feature type="splice variant" id="VSP_041338" description="In isoform 3." evidence="4">
    <location>
        <begin position="33"/>
        <end position="461"/>
    </location>
</feature>
<feature type="splice variant" id="VSP_041339" description="In isoform 3." evidence="4">
    <original>RWGGSLGSHNRVCVTNNH</original>
    <variation>RERVLKKTGHRLSKTKQKRNRKRNKKQNSQNRIMEENSLEFLSDLTPGDQDPSQSEEEDIEKTRRESEYPFIDGLQNEVGDFVTGYKEKRWKNKDPKDSFQNVMSIVELDNTPKNYLSKEGDNLFVSLLLRPNEISVTCPILTQNLSCVTTDDCSGMKVEKHIRNRHTIALDTQDLSAETSCLFMKKREIVDKNLSHEPILCHQHGIRMSDKVLREEQVYTTKINHWAFFTTNLSDEDLQLGSDRQPYFGSWPAGPHKFICEQRPKKDRACKLAGPDSRGQWIQMIFTSVAASEPGNNPEILTDKLLIGNEDFSPPPETMDSFIETNLFRSCLPQPDIPKNALESTKNKKRRKKRIFNLVPNFDLLGQSRIGVKEREKCDLLTKNHGLKITLGEEKDRISERNSEEENKQKLMTFDHHPLWFYLDIIKATPLNIDGQRYSHCLSFNRLRCSASLYKNYIPSFVLHNLSSIWKPSFTNKKLFLTFESQTRVGNKLNDAGFISPEILHSHPDTSCSLGVTSDFHFLNERFDRKLKRWEEPKELPAEDSQDLTSTDYRSLELPLSQGFAFQLVKLFGSPGVPMESLLPDDYVVPLDWKTLKMIYLQWKMSVEKRQKKIG</variation>
    <location>
        <begin position="566"/>
        <end position="583"/>
    </location>
</feature>
<feature type="splice variant" id="VSP_027518" description="In isoform 2." evidence="3">
    <original>WGGSLGSHNRVCVTNNH</original>
    <variation>FDRKLKRWEEPKELPAEDSQDLTSTDYRSLELPLSQGFAFQLVKLFGSPGVPMESLLPDDYVVPLDWKTLKMIYLQWKMSVEKRQKKIG</variation>
    <location>
        <begin position="567"/>
        <end position="583"/>
    </location>
</feature>
<feature type="sequence variant" id="VAR_034765" description="In dbSNP:rs34062461.">
    <original>Y</original>
    <variation>H</variation>
    <location>
        <position position="272"/>
    </location>
</feature>
<name>N42L2_HUMAN</name>
<keyword id="KW-0025">Alternative splicing</keyword>
<keyword id="KW-0175">Coiled coil</keyword>
<keyword id="KW-1267">Proteomics identification</keyword>
<keyword id="KW-1185">Reference proteome</keyword>